<name>ARNF_ECOL6</name>
<sequence length="128" mass="14057">MGLMWGLFSVIIASAAQLSLGFAASHLPPMTHLWDFIAALLAFGLDARILLLGLLGYLLSVFCWYKTLHKLALSKAYALLSMSYVLVWIASMVLPGWEGTFSLKALLGVACIMSGLMLIFLPTTKQRY</sequence>
<comment type="function">
    <text evidence="1">Translocates 4-amino-4-deoxy-L-arabinose-phosphoundecaprenol (alpha-L-Ara4N-phosphoundecaprenol) from the cytoplasmic to the periplasmic side of the inner membrane.</text>
</comment>
<comment type="pathway">
    <text evidence="1">Bacterial outer membrane biogenesis; lipopolysaccharide biosynthesis.</text>
</comment>
<comment type="subunit">
    <text evidence="1">Heterodimer of ArnE and ArnF.</text>
</comment>
<comment type="subcellular location">
    <subcellularLocation>
        <location evidence="1">Cell inner membrane</location>
        <topology evidence="1">Multi-pass membrane protein</topology>
    </subcellularLocation>
</comment>
<comment type="similarity">
    <text evidence="1">Belongs to the ArnF family.</text>
</comment>
<comment type="sequence caution" evidence="2">
    <conflict type="erroneous initiation">
        <sequence resource="EMBL-CDS" id="AAN81255"/>
    </conflict>
</comment>
<organism>
    <name type="scientific">Escherichia coli O6:H1 (strain CFT073 / ATCC 700928 / UPEC)</name>
    <dbReference type="NCBI Taxonomy" id="199310"/>
    <lineage>
        <taxon>Bacteria</taxon>
        <taxon>Pseudomonadati</taxon>
        <taxon>Pseudomonadota</taxon>
        <taxon>Gammaproteobacteria</taxon>
        <taxon>Enterobacterales</taxon>
        <taxon>Enterobacteriaceae</taxon>
        <taxon>Escherichia</taxon>
    </lineage>
</organism>
<accession>Q8FFL7</accession>
<evidence type="ECO:0000255" key="1">
    <source>
        <dbReference type="HAMAP-Rule" id="MF_00538"/>
    </source>
</evidence>
<evidence type="ECO:0000305" key="2"/>
<reference key="1">
    <citation type="journal article" date="2002" name="Proc. Natl. Acad. Sci. U.S.A.">
        <title>Extensive mosaic structure revealed by the complete genome sequence of uropathogenic Escherichia coli.</title>
        <authorList>
            <person name="Welch R.A."/>
            <person name="Burland V."/>
            <person name="Plunkett G. III"/>
            <person name="Redford P."/>
            <person name="Roesch P."/>
            <person name="Rasko D."/>
            <person name="Buckles E.L."/>
            <person name="Liou S.-R."/>
            <person name="Boutin A."/>
            <person name="Hackett J."/>
            <person name="Stroud D."/>
            <person name="Mayhew G.F."/>
            <person name="Rose D.J."/>
            <person name="Zhou S."/>
            <person name="Schwartz D.C."/>
            <person name="Perna N.T."/>
            <person name="Mobley H.L.T."/>
            <person name="Donnenberg M.S."/>
            <person name="Blattner F.R."/>
        </authorList>
    </citation>
    <scope>NUCLEOTIDE SEQUENCE [LARGE SCALE GENOMIC DNA]</scope>
    <source>
        <strain>CFT073 / ATCC 700928 / UPEC</strain>
    </source>
</reference>
<proteinExistence type="inferred from homology"/>
<feature type="chain" id="PRO_0000218153" description="Probable 4-amino-4-deoxy-L-arabinose-phosphoundecaprenol flippase subunit ArnF">
    <location>
        <begin position="1"/>
        <end position="128"/>
    </location>
</feature>
<feature type="topological domain" description="Cytoplasmic" evidence="1">
    <location>
        <begin position="1"/>
        <end position="2"/>
    </location>
</feature>
<feature type="transmembrane region" description="Helical" evidence="1">
    <location>
        <begin position="3"/>
        <end position="23"/>
    </location>
</feature>
<feature type="topological domain" description="Periplasmic" evidence="1">
    <location>
        <begin position="24"/>
        <end position="35"/>
    </location>
</feature>
<feature type="transmembrane region" description="Helical" evidence="1">
    <location>
        <begin position="36"/>
        <end position="56"/>
    </location>
</feature>
<feature type="topological domain" description="Cytoplasmic" evidence="1">
    <location>
        <begin position="57"/>
        <end position="76"/>
    </location>
</feature>
<feature type="transmembrane region" description="Helical" evidence="1">
    <location>
        <begin position="77"/>
        <end position="97"/>
    </location>
</feature>
<feature type="topological domain" description="Periplasmic" evidence="1">
    <location>
        <begin position="98"/>
        <end position="100"/>
    </location>
</feature>
<feature type="transmembrane region" description="Helical" evidence="1">
    <location>
        <begin position="101"/>
        <end position="121"/>
    </location>
</feature>
<feature type="topological domain" description="Cytoplasmic" evidence="1">
    <location>
        <begin position="122"/>
        <end position="128"/>
    </location>
</feature>
<dbReference type="EMBL" id="AE014075">
    <property type="protein sequence ID" value="AAN81255.1"/>
    <property type="status" value="ALT_INIT"/>
    <property type="molecule type" value="Genomic_DNA"/>
</dbReference>
<dbReference type="RefSeq" id="WP_000523864.1">
    <property type="nucleotide sequence ID" value="NZ_CP051263.1"/>
</dbReference>
<dbReference type="STRING" id="199310.c2801"/>
<dbReference type="KEGG" id="ecc:c2801"/>
<dbReference type="eggNOG" id="COG2076">
    <property type="taxonomic scope" value="Bacteria"/>
</dbReference>
<dbReference type="HOGENOM" id="CLU_1243704_0_0_6"/>
<dbReference type="UniPathway" id="UPA00030"/>
<dbReference type="Proteomes" id="UP000001410">
    <property type="component" value="Chromosome"/>
</dbReference>
<dbReference type="GO" id="GO:0005886">
    <property type="term" value="C:plasma membrane"/>
    <property type="evidence" value="ECO:0007669"/>
    <property type="project" value="UniProtKB-SubCell"/>
</dbReference>
<dbReference type="GO" id="GO:1901505">
    <property type="term" value="F:carbohydrate derivative transmembrane transporter activity"/>
    <property type="evidence" value="ECO:0007669"/>
    <property type="project" value="InterPro"/>
</dbReference>
<dbReference type="GO" id="GO:0009245">
    <property type="term" value="P:lipid A biosynthetic process"/>
    <property type="evidence" value="ECO:0007669"/>
    <property type="project" value="UniProtKB-UniRule"/>
</dbReference>
<dbReference type="GO" id="GO:0009103">
    <property type="term" value="P:lipopolysaccharide biosynthetic process"/>
    <property type="evidence" value="ECO:0007669"/>
    <property type="project" value="UniProtKB-UniRule"/>
</dbReference>
<dbReference type="FunFam" id="1.10.3730.20:FF:000003">
    <property type="entry name" value="Probable 4-amino-4-deoxy-L-arabinose-phosphoundecaprenol flippase subunit ArnF"/>
    <property type="match status" value="1"/>
</dbReference>
<dbReference type="Gene3D" id="1.10.3730.20">
    <property type="match status" value="1"/>
</dbReference>
<dbReference type="HAMAP" id="MF_00538">
    <property type="entry name" value="Flippase_ArnF"/>
    <property type="match status" value="1"/>
</dbReference>
<dbReference type="InterPro" id="IPR022832">
    <property type="entry name" value="Flippase_ArnF"/>
</dbReference>
<dbReference type="InterPro" id="IPR000390">
    <property type="entry name" value="Small_drug/metabolite_transptr"/>
</dbReference>
<dbReference type="NCBIfam" id="NF002816">
    <property type="entry name" value="PRK02971.1-2"/>
    <property type="match status" value="1"/>
</dbReference>
<dbReference type="PANTHER" id="PTHR30561:SF9">
    <property type="entry name" value="4-AMINO-4-DEOXY-L-ARABINOSE-PHOSPHOUNDECAPRENOL FLIPPASE SUBUNIT ARNF-RELATED"/>
    <property type="match status" value="1"/>
</dbReference>
<dbReference type="PANTHER" id="PTHR30561">
    <property type="entry name" value="SMR FAMILY PROTON-DEPENDENT DRUG EFFLUX TRANSPORTER SUGE"/>
    <property type="match status" value="1"/>
</dbReference>
<dbReference type="SUPFAM" id="SSF103481">
    <property type="entry name" value="Multidrug resistance efflux transporter EmrE"/>
    <property type="match status" value="1"/>
</dbReference>
<protein>
    <recommendedName>
        <fullName evidence="1">Probable 4-amino-4-deoxy-L-arabinose-phosphoundecaprenol flippase subunit ArnF</fullName>
        <shortName evidence="1">L-Ara4N-phosphoundecaprenol flippase subunit ArnF</shortName>
    </recommendedName>
    <alternativeName>
        <fullName evidence="1">Undecaprenyl phosphate-aminoarabinose flippase subunit ArnF</fullName>
    </alternativeName>
</protein>
<keyword id="KW-0997">Cell inner membrane</keyword>
<keyword id="KW-1003">Cell membrane</keyword>
<keyword id="KW-0441">Lipid A biosynthesis</keyword>
<keyword id="KW-0444">Lipid biosynthesis</keyword>
<keyword id="KW-0443">Lipid metabolism</keyword>
<keyword id="KW-0448">Lipopolysaccharide biosynthesis</keyword>
<keyword id="KW-0472">Membrane</keyword>
<keyword id="KW-1185">Reference proteome</keyword>
<keyword id="KW-0812">Transmembrane</keyword>
<keyword id="KW-1133">Transmembrane helix</keyword>
<keyword id="KW-0813">Transport</keyword>
<gene>
    <name evidence="1" type="primary">arnF</name>
    <name type="ordered locus">c2801</name>
</gene>